<evidence type="ECO:0000255" key="1">
    <source>
        <dbReference type="HAMAP-Rule" id="MF_01229"/>
    </source>
</evidence>
<proteinExistence type="inferred from homology"/>
<name>SSUD_ECO55</name>
<keyword id="KW-0285">Flavoprotein</keyword>
<keyword id="KW-0288">FMN</keyword>
<keyword id="KW-0503">Monooxygenase</keyword>
<keyword id="KW-0560">Oxidoreductase</keyword>
<keyword id="KW-1185">Reference proteome</keyword>
<feature type="chain" id="PRO_1000164968" description="Alkanesulfonate monooxygenase">
    <location>
        <begin position="1"/>
        <end position="381"/>
    </location>
</feature>
<gene>
    <name evidence="1" type="primary">ssuD</name>
    <name type="ordered locus">EC55989_0984</name>
</gene>
<organism>
    <name type="scientific">Escherichia coli (strain 55989 / EAEC)</name>
    <dbReference type="NCBI Taxonomy" id="585055"/>
    <lineage>
        <taxon>Bacteria</taxon>
        <taxon>Pseudomonadati</taxon>
        <taxon>Pseudomonadota</taxon>
        <taxon>Gammaproteobacteria</taxon>
        <taxon>Enterobacterales</taxon>
        <taxon>Enterobacteriaceae</taxon>
        <taxon>Escherichia</taxon>
    </lineage>
</organism>
<accession>B7LE35</accession>
<reference key="1">
    <citation type="journal article" date="2009" name="PLoS Genet.">
        <title>Organised genome dynamics in the Escherichia coli species results in highly diverse adaptive paths.</title>
        <authorList>
            <person name="Touchon M."/>
            <person name="Hoede C."/>
            <person name="Tenaillon O."/>
            <person name="Barbe V."/>
            <person name="Baeriswyl S."/>
            <person name="Bidet P."/>
            <person name="Bingen E."/>
            <person name="Bonacorsi S."/>
            <person name="Bouchier C."/>
            <person name="Bouvet O."/>
            <person name="Calteau A."/>
            <person name="Chiapello H."/>
            <person name="Clermont O."/>
            <person name="Cruveiller S."/>
            <person name="Danchin A."/>
            <person name="Diard M."/>
            <person name="Dossat C."/>
            <person name="Karoui M.E."/>
            <person name="Frapy E."/>
            <person name="Garry L."/>
            <person name="Ghigo J.M."/>
            <person name="Gilles A.M."/>
            <person name="Johnson J."/>
            <person name="Le Bouguenec C."/>
            <person name="Lescat M."/>
            <person name="Mangenot S."/>
            <person name="Martinez-Jehanne V."/>
            <person name="Matic I."/>
            <person name="Nassif X."/>
            <person name="Oztas S."/>
            <person name="Petit M.A."/>
            <person name="Pichon C."/>
            <person name="Rouy Z."/>
            <person name="Ruf C.S."/>
            <person name="Schneider D."/>
            <person name="Tourret J."/>
            <person name="Vacherie B."/>
            <person name="Vallenet D."/>
            <person name="Medigue C."/>
            <person name="Rocha E.P.C."/>
            <person name="Denamur E."/>
        </authorList>
    </citation>
    <scope>NUCLEOTIDE SEQUENCE [LARGE SCALE GENOMIC DNA]</scope>
    <source>
        <strain>55989 / EAEC</strain>
    </source>
</reference>
<sequence>MSLNMFWFLPTHGDGHYLGTEEGSRPVDHGYLQQIAQAADRLGYTGVLIPTGRSCEDAWLVAASMIPVTQRLKFLVALRPSVTSPTVAARQAATLDRLSNGRALFNLVTGSDPQELAGDGVFLDHSERYEASAEFTQVWRRLLLGETVNFNGKHIHVRGAKLLFPPIQQPYPPLYFGGSSDVAQELAAEQVDLYLTWGEPPELVKEKIEQVRAKAAAHGRKIRFGIRLHVIVRETNDEAWQAAERLISHLDDETIAKAQAAFARTDSVGQQRMAALHNGKRDNLEISPNLWAGVGLVRGGAGTALVGDGPTVAARINEYAALGIDSFVLSGYPHLEEAYRVGELLFPHLDVAIPEIPQPQPLNPQGEAVANDFIPRKVAQS</sequence>
<dbReference type="EC" id="1.14.14.5" evidence="1"/>
<dbReference type="EMBL" id="CU928145">
    <property type="protein sequence ID" value="CAU96846.1"/>
    <property type="molecule type" value="Genomic_DNA"/>
</dbReference>
<dbReference type="RefSeq" id="WP_000055996.1">
    <property type="nucleotide sequence ID" value="NC_011748.1"/>
</dbReference>
<dbReference type="SMR" id="B7LE35"/>
<dbReference type="GeneID" id="75204026"/>
<dbReference type="KEGG" id="eck:EC55989_0984"/>
<dbReference type="HOGENOM" id="CLU_027853_1_0_6"/>
<dbReference type="Proteomes" id="UP000000746">
    <property type="component" value="Chromosome"/>
</dbReference>
<dbReference type="GO" id="GO:0008726">
    <property type="term" value="F:alkanesulfonate monooxygenase activity"/>
    <property type="evidence" value="ECO:0007669"/>
    <property type="project" value="UniProtKB-UniRule"/>
</dbReference>
<dbReference type="GO" id="GO:0046306">
    <property type="term" value="P:alkanesulfonate catabolic process"/>
    <property type="evidence" value="ECO:0007669"/>
    <property type="project" value="TreeGrafter"/>
</dbReference>
<dbReference type="CDD" id="cd01094">
    <property type="entry name" value="Alkanesulfonate_monoxygenase"/>
    <property type="match status" value="1"/>
</dbReference>
<dbReference type="FunFam" id="3.20.20.30:FF:000001">
    <property type="entry name" value="Alkanesulfonate monooxygenase"/>
    <property type="match status" value="1"/>
</dbReference>
<dbReference type="Gene3D" id="3.20.20.30">
    <property type="entry name" value="Luciferase-like domain"/>
    <property type="match status" value="1"/>
</dbReference>
<dbReference type="HAMAP" id="MF_01229">
    <property type="entry name" value="Alkanesulf_monooxygen"/>
    <property type="match status" value="1"/>
</dbReference>
<dbReference type="InterPro" id="IPR019911">
    <property type="entry name" value="Alkanesulphonate_mOase_FMN-dep"/>
</dbReference>
<dbReference type="InterPro" id="IPR011251">
    <property type="entry name" value="Luciferase-like_dom"/>
</dbReference>
<dbReference type="InterPro" id="IPR036661">
    <property type="entry name" value="Luciferase-like_sf"/>
</dbReference>
<dbReference type="InterPro" id="IPR050172">
    <property type="entry name" value="SsuD_RutA_monooxygenase"/>
</dbReference>
<dbReference type="NCBIfam" id="TIGR03565">
    <property type="entry name" value="alk_sulf_monoox"/>
    <property type="match status" value="1"/>
</dbReference>
<dbReference type="NCBIfam" id="NF001939">
    <property type="entry name" value="PRK00719.1"/>
    <property type="match status" value="1"/>
</dbReference>
<dbReference type="PANTHER" id="PTHR42847">
    <property type="entry name" value="ALKANESULFONATE MONOOXYGENASE"/>
    <property type="match status" value="1"/>
</dbReference>
<dbReference type="PANTHER" id="PTHR42847:SF4">
    <property type="entry name" value="ALKANESULFONATE MONOOXYGENASE-RELATED"/>
    <property type="match status" value="1"/>
</dbReference>
<dbReference type="Pfam" id="PF00296">
    <property type="entry name" value="Bac_luciferase"/>
    <property type="match status" value="1"/>
</dbReference>
<dbReference type="SUPFAM" id="SSF51679">
    <property type="entry name" value="Bacterial luciferase-like"/>
    <property type="match status" value="1"/>
</dbReference>
<protein>
    <recommendedName>
        <fullName evidence="1">Alkanesulfonate monooxygenase</fullName>
        <ecNumber evidence="1">1.14.14.5</ecNumber>
    </recommendedName>
    <alternativeName>
        <fullName evidence="1">FMNH2-dependent aliphatic sulfonate monooxygenase</fullName>
    </alternativeName>
</protein>
<comment type="function">
    <text evidence="1">Catalyzes the desulfonation of aliphatic sulfonates.</text>
</comment>
<comment type="catalytic activity">
    <reaction evidence="1">
        <text>an alkanesulfonate + FMNH2 + O2 = an aldehyde + FMN + sulfite + H2O + 2 H(+)</text>
        <dbReference type="Rhea" id="RHEA:23064"/>
        <dbReference type="ChEBI" id="CHEBI:15377"/>
        <dbReference type="ChEBI" id="CHEBI:15378"/>
        <dbReference type="ChEBI" id="CHEBI:15379"/>
        <dbReference type="ChEBI" id="CHEBI:17359"/>
        <dbReference type="ChEBI" id="CHEBI:17478"/>
        <dbReference type="ChEBI" id="CHEBI:57618"/>
        <dbReference type="ChEBI" id="CHEBI:58210"/>
        <dbReference type="ChEBI" id="CHEBI:134249"/>
        <dbReference type="EC" id="1.14.14.5"/>
    </reaction>
</comment>
<comment type="subunit">
    <text evidence="1">Homotetramer.</text>
</comment>
<comment type="miscellaneous">
    <text evidence="1">FMNH(2) which is absolutely required for this enzymatic reaction, is provided by SsuE.</text>
</comment>
<comment type="similarity">
    <text evidence="1">Belongs to the SsuD family.</text>
</comment>